<evidence type="ECO:0000255" key="1"/>
<evidence type="ECO:0000255" key="2">
    <source>
        <dbReference type="PROSITE-ProRule" id="PRU00175"/>
    </source>
</evidence>
<evidence type="ECO:0000256" key="3">
    <source>
        <dbReference type="SAM" id="MobiDB-lite"/>
    </source>
</evidence>
<evidence type="ECO:0000305" key="4"/>
<sequence length="379" mass="41610">MGSADRPALRSPSLPPPPPSPPSPLLLLLPLLPLWLGLMGPGAAADGSEPATGEGRGGARSVRVDVKLPRQDALVLEGVRIGPEDGPEPLLGGRLLLMDVVDAEQEIPVDGWIAVAYVGKEQVAQFHQENQGSSQKAYPKALVQQMRRALFLGASALLLLILNHSVVRELDVSQLLLRPVIVLHYSSNVTKLLEALLQRTQATAEISSGESLSANIEWKLTLWTTCGLSKDGYGGWQDLVCLGGAQAQEQKPLQQLWNAILLVAMLLCTGLVVQAQRQASRQNQQEPGGQEDLFKRRVVRRLASLKTRRCRLSRAAHSLPEPGTETCAVCLDYFCNKQWLRVLPCKHEFHRDCVDPWLMLQQTCPLCKFNVLGNHYSDD</sequence>
<reference key="1">
    <citation type="journal article" date="2005" name="Science">
        <title>The transcriptional landscape of the mammalian genome.</title>
        <authorList>
            <person name="Carninci P."/>
            <person name="Kasukawa T."/>
            <person name="Katayama S."/>
            <person name="Gough J."/>
            <person name="Frith M.C."/>
            <person name="Maeda N."/>
            <person name="Oyama R."/>
            <person name="Ravasi T."/>
            <person name="Lenhard B."/>
            <person name="Wells C."/>
            <person name="Kodzius R."/>
            <person name="Shimokawa K."/>
            <person name="Bajic V.B."/>
            <person name="Brenner S.E."/>
            <person name="Batalov S."/>
            <person name="Forrest A.R."/>
            <person name="Zavolan M."/>
            <person name="Davis M.J."/>
            <person name="Wilming L.G."/>
            <person name="Aidinis V."/>
            <person name="Allen J.E."/>
            <person name="Ambesi-Impiombato A."/>
            <person name="Apweiler R."/>
            <person name="Aturaliya R.N."/>
            <person name="Bailey T.L."/>
            <person name="Bansal M."/>
            <person name="Baxter L."/>
            <person name="Beisel K.W."/>
            <person name="Bersano T."/>
            <person name="Bono H."/>
            <person name="Chalk A.M."/>
            <person name="Chiu K.P."/>
            <person name="Choudhary V."/>
            <person name="Christoffels A."/>
            <person name="Clutterbuck D.R."/>
            <person name="Crowe M.L."/>
            <person name="Dalla E."/>
            <person name="Dalrymple B.P."/>
            <person name="de Bono B."/>
            <person name="Della Gatta G."/>
            <person name="di Bernardo D."/>
            <person name="Down T."/>
            <person name="Engstrom P."/>
            <person name="Fagiolini M."/>
            <person name="Faulkner G."/>
            <person name="Fletcher C.F."/>
            <person name="Fukushima T."/>
            <person name="Furuno M."/>
            <person name="Futaki S."/>
            <person name="Gariboldi M."/>
            <person name="Georgii-Hemming P."/>
            <person name="Gingeras T.R."/>
            <person name="Gojobori T."/>
            <person name="Green R.E."/>
            <person name="Gustincich S."/>
            <person name="Harbers M."/>
            <person name="Hayashi Y."/>
            <person name="Hensch T.K."/>
            <person name="Hirokawa N."/>
            <person name="Hill D."/>
            <person name="Huminiecki L."/>
            <person name="Iacono M."/>
            <person name="Ikeo K."/>
            <person name="Iwama A."/>
            <person name="Ishikawa T."/>
            <person name="Jakt M."/>
            <person name="Kanapin A."/>
            <person name="Katoh M."/>
            <person name="Kawasawa Y."/>
            <person name="Kelso J."/>
            <person name="Kitamura H."/>
            <person name="Kitano H."/>
            <person name="Kollias G."/>
            <person name="Krishnan S.P."/>
            <person name="Kruger A."/>
            <person name="Kummerfeld S.K."/>
            <person name="Kurochkin I.V."/>
            <person name="Lareau L.F."/>
            <person name="Lazarevic D."/>
            <person name="Lipovich L."/>
            <person name="Liu J."/>
            <person name="Liuni S."/>
            <person name="McWilliam S."/>
            <person name="Madan Babu M."/>
            <person name="Madera M."/>
            <person name="Marchionni L."/>
            <person name="Matsuda H."/>
            <person name="Matsuzawa S."/>
            <person name="Miki H."/>
            <person name="Mignone F."/>
            <person name="Miyake S."/>
            <person name="Morris K."/>
            <person name="Mottagui-Tabar S."/>
            <person name="Mulder N."/>
            <person name="Nakano N."/>
            <person name="Nakauchi H."/>
            <person name="Ng P."/>
            <person name="Nilsson R."/>
            <person name="Nishiguchi S."/>
            <person name="Nishikawa S."/>
            <person name="Nori F."/>
            <person name="Ohara O."/>
            <person name="Okazaki Y."/>
            <person name="Orlando V."/>
            <person name="Pang K.C."/>
            <person name="Pavan W.J."/>
            <person name="Pavesi G."/>
            <person name="Pesole G."/>
            <person name="Petrovsky N."/>
            <person name="Piazza S."/>
            <person name="Reed J."/>
            <person name="Reid J.F."/>
            <person name="Ring B.Z."/>
            <person name="Ringwald M."/>
            <person name="Rost B."/>
            <person name="Ruan Y."/>
            <person name="Salzberg S.L."/>
            <person name="Sandelin A."/>
            <person name="Schneider C."/>
            <person name="Schoenbach C."/>
            <person name="Sekiguchi K."/>
            <person name="Semple C.A."/>
            <person name="Seno S."/>
            <person name="Sessa L."/>
            <person name="Sheng Y."/>
            <person name="Shibata Y."/>
            <person name="Shimada H."/>
            <person name="Shimada K."/>
            <person name="Silva D."/>
            <person name="Sinclair B."/>
            <person name="Sperling S."/>
            <person name="Stupka E."/>
            <person name="Sugiura K."/>
            <person name="Sultana R."/>
            <person name="Takenaka Y."/>
            <person name="Taki K."/>
            <person name="Tammoja K."/>
            <person name="Tan S.L."/>
            <person name="Tang S."/>
            <person name="Taylor M.S."/>
            <person name="Tegner J."/>
            <person name="Teichmann S.A."/>
            <person name="Ueda H.R."/>
            <person name="van Nimwegen E."/>
            <person name="Verardo R."/>
            <person name="Wei C.L."/>
            <person name="Yagi K."/>
            <person name="Yamanishi H."/>
            <person name="Zabarovsky E."/>
            <person name="Zhu S."/>
            <person name="Zimmer A."/>
            <person name="Hide W."/>
            <person name="Bult C."/>
            <person name="Grimmond S.M."/>
            <person name="Teasdale R.D."/>
            <person name="Liu E.T."/>
            <person name="Brusic V."/>
            <person name="Quackenbush J."/>
            <person name="Wahlestedt C."/>
            <person name="Mattick J.S."/>
            <person name="Hume D.A."/>
            <person name="Kai C."/>
            <person name="Sasaki D."/>
            <person name="Tomaru Y."/>
            <person name="Fukuda S."/>
            <person name="Kanamori-Katayama M."/>
            <person name="Suzuki M."/>
            <person name="Aoki J."/>
            <person name="Arakawa T."/>
            <person name="Iida J."/>
            <person name="Imamura K."/>
            <person name="Itoh M."/>
            <person name="Kato T."/>
            <person name="Kawaji H."/>
            <person name="Kawagashira N."/>
            <person name="Kawashima T."/>
            <person name="Kojima M."/>
            <person name="Kondo S."/>
            <person name="Konno H."/>
            <person name="Nakano K."/>
            <person name="Ninomiya N."/>
            <person name="Nishio T."/>
            <person name="Okada M."/>
            <person name="Plessy C."/>
            <person name="Shibata K."/>
            <person name="Shiraki T."/>
            <person name="Suzuki S."/>
            <person name="Tagami M."/>
            <person name="Waki K."/>
            <person name="Watahiki A."/>
            <person name="Okamura-Oho Y."/>
            <person name="Suzuki H."/>
            <person name="Kawai J."/>
            <person name="Hayashizaki Y."/>
        </authorList>
    </citation>
    <scope>NUCLEOTIDE SEQUENCE [LARGE SCALE MRNA]</scope>
    <source>
        <strain>C57BL/6J</strain>
        <tissue>Kidney</tissue>
    </source>
</reference>
<reference key="2">
    <citation type="journal article" date="2009" name="PLoS Biol.">
        <title>Lineage-specific biology revealed by a finished genome assembly of the mouse.</title>
        <authorList>
            <person name="Church D.M."/>
            <person name="Goodstadt L."/>
            <person name="Hillier L.W."/>
            <person name="Zody M.C."/>
            <person name="Goldstein S."/>
            <person name="She X."/>
            <person name="Bult C.J."/>
            <person name="Agarwala R."/>
            <person name="Cherry J.L."/>
            <person name="DiCuccio M."/>
            <person name="Hlavina W."/>
            <person name="Kapustin Y."/>
            <person name="Meric P."/>
            <person name="Maglott D."/>
            <person name="Birtle Z."/>
            <person name="Marques A.C."/>
            <person name="Graves T."/>
            <person name="Zhou S."/>
            <person name="Teague B."/>
            <person name="Potamousis K."/>
            <person name="Churas C."/>
            <person name="Place M."/>
            <person name="Herschleb J."/>
            <person name="Runnheim R."/>
            <person name="Forrest D."/>
            <person name="Amos-Landgraf J."/>
            <person name="Schwartz D.C."/>
            <person name="Cheng Z."/>
            <person name="Lindblad-Toh K."/>
            <person name="Eichler E.E."/>
            <person name="Ponting C.P."/>
        </authorList>
    </citation>
    <scope>NUCLEOTIDE SEQUENCE [LARGE SCALE GENOMIC DNA]</scope>
    <source>
        <strain>C57BL/6J</strain>
    </source>
</reference>
<reference key="3">
    <citation type="journal article" date="2004" name="Genome Res.">
        <title>The status, quality, and expansion of the NIH full-length cDNA project: the Mammalian Gene Collection (MGC).</title>
        <authorList>
            <consortium name="The MGC Project Team"/>
        </authorList>
    </citation>
    <scope>NUCLEOTIDE SEQUENCE [LARGE SCALE MRNA]</scope>
    <source>
        <tissue>Mammary tumor</tissue>
    </source>
</reference>
<feature type="chain" id="PRO_0000287535" description="RING finger protein 215">
    <location>
        <begin position="1"/>
        <end position="379"/>
    </location>
</feature>
<feature type="topological domain" description="Cytoplasmic" evidence="1">
    <location>
        <begin position="1"/>
        <end position="24"/>
    </location>
</feature>
<feature type="transmembrane region" description="Helical" evidence="1">
    <location>
        <begin position="25"/>
        <end position="45"/>
    </location>
</feature>
<feature type="topological domain" description="Extracellular" evidence="1">
    <location>
        <begin position="46"/>
        <end position="252"/>
    </location>
</feature>
<feature type="transmembrane region" description="Helical" evidence="1">
    <location>
        <begin position="253"/>
        <end position="273"/>
    </location>
</feature>
<feature type="topological domain" description="Cytoplasmic" evidence="1">
    <location>
        <begin position="274"/>
        <end position="379"/>
    </location>
</feature>
<feature type="zinc finger region" description="RING-type; atypical" evidence="2">
    <location>
        <begin position="327"/>
        <end position="368"/>
    </location>
</feature>
<feature type="region of interest" description="Disordered" evidence="3">
    <location>
        <begin position="1"/>
        <end position="21"/>
    </location>
</feature>
<feature type="region of interest" description="Disordered" evidence="3">
    <location>
        <begin position="44"/>
        <end position="63"/>
    </location>
</feature>
<feature type="glycosylation site" description="N-linked (GlcNAc...) asparagine" evidence="1">
    <location>
        <position position="188"/>
    </location>
</feature>
<feature type="sequence conflict" description="In Ref. 1; BAB22082." evidence="4" ref="1">
    <original>RS</original>
    <variation>PL</variation>
    <location>
        <begin position="60"/>
        <end position="61"/>
    </location>
</feature>
<dbReference type="EMBL" id="AK002414">
    <property type="protein sequence ID" value="BAB22082.1"/>
    <property type="molecule type" value="mRNA"/>
</dbReference>
<dbReference type="EMBL" id="AL807825">
    <property type="protein sequence ID" value="CAI25741.1"/>
    <property type="status" value="ALT_SEQ"/>
    <property type="molecule type" value="Genomic_DNA"/>
</dbReference>
<dbReference type="EMBL" id="AL807825">
    <property type="protein sequence ID" value="CAI25742.1"/>
    <property type="molecule type" value="Genomic_DNA"/>
</dbReference>
<dbReference type="EMBL" id="AL807825">
    <property type="protein sequence ID" value="CAI25743.1"/>
    <property type="status" value="ALT_SEQ"/>
    <property type="molecule type" value="Genomic_DNA"/>
</dbReference>
<dbReference type="EMBL" id="BC103627">
    <property type="protein sequence ID" value="AAI03628.1"/>
    <property type="molecule type" value="mRNA"/>
</dbReference>
<dbReference type="EMBL" id="BC115907">
    <property type="protein sequence ID" value="AAI15908.1"/>
    <property type="molecule type" value="mRNA"/>
</dbReference>
<dbReference type="EMBL" id="BC115908">
    <property type="protein sequence ID" value="AAI15909.1"/>
    <property type="molecule type" value="mRNA"/>
</dbReference>
<dbReference type="CCDS" id="CCDS24378.1"/>
<dbReference type="RefSeq" id="NP_082135.2">
    <property type="nucleotide sequence ID" value="NM_027859.3"/>
</dbReference>
<dbReference type="SMR" id="Q5SPX3"/>
<dbReference type="FunCoup" id="Q5SPX3">
    <property type="interactions" value="925"/>
</dbReference>
<dbReference type="STRING" id="10090.ENSMUSP00000003677"/>
<dbReference type="GlyCosmos" id="Q5SPX3">
    <property type="glycosylation" value="1 site, No reported glycans"/>
</dbReference>
<dbReference type="GlyGen" id="Q5SPX3">
    <property type="glycosylation" value="1 site, 1 N-linked glycan (1 site)"/>
</dbReference>
<dbReference type="PhosphoSitePlus" id="Q5SPX3"/>
<dbReference type="PaxDb" id="10090-ENSMUSP00000003677"/>
<dbReference type="Antibodypedia" id="24705">
    <property type="antibodies" value="98 antibodies from 14 providers"/>
</dbReference>
<dbReference type="DNASU" id="71673"/>
<dbReference type="Ensembl" id="ENSMUST00000003677.11">
    <property type="protein sequence ID" value="ENSMUSP00000003677.5"/>
    <property type="gene ID" value="ENSMUSG00000003581.15"/>
</dbReference>
<dbReference type="GeneID" id="71673"/>
<dbReference type="KEGG" id="mmu:71673"/>
<dbReference type="UCSC" id="uc007hui.1">
    <property type="organism name" value="mouse"/>
</dbReference>
<dbReference type="AGR" id="MGI:1918923"/>
<dbReference type="CTD" id="200312"/>
<dbReference type="MGI" id="MGI:1918923">
    <property type="gene designation" value="Rnf215"/>
</dbReference>
<dbReference type="VEuPathDB" id="HostDB:ENSMUSG00000003581"/>
<dbReference type="eggNOG" id="KOG0800">
    <property type="taxonomic scope" value="Eukaryota"/>
</dbReference>
<dbReference type="GeneTree" id="ENSGT00940000159671"/>
<dbReference type="HOGENOM" id="CLU_049329_0_0_1"/>
<dbReference type="InParanoid" id="Q5SPX3"/>
<dbReference type="OMA" id="GAQAYPK"/>
<dbReference type="OrthoDB" id="8062037at2759"/>
<dbReference type="PhylomeDB" id="Q5SPX3"/>
<dbReference type="TreeFam" id="TF317074"/>
<dbReference type="BioGRID-ORCS" id="71673">
    <property type="hits" value="1 hit in 77 CRISPR screens"/>
</dbReference>
<dbReference type="PRO" id="PR:Q5SPX3"/>
<dbReference type="Proteomes" id="UP000000589">
    <property type="component" value="Chromosome 11"/>
</dbReference>
<dbReference type="RNAct" id="Q5SPX3">
    <property type="molecule type" value="protein"/>
</dbReference>
<dbReference type="Bgee" id="ENSMUSG00000003581">
    <property type="expression patterns" value="Expressed in hypothalamus and 64 other cell types or tissues"/>
</dbReference>
<dbReference type="ExpressionAtlas" id="Q5SPX3">
    <property type="expression patterns" value="baseline and differential"/>
</dbReference>
<dbReference type="GO" id="GO:0016020">
    <property type="term" value="C:membrane"/>
    <property type="evidence" value="ECO:0007669"/>
    <property type="project" value="UniProtKB-SubCell"/>
</dbReference>
<dbReference type="GO" id="GO:0008270">
    <property type="term" value="F:zinc ion binding"/>
    <property type="evidence" value="ECO:0007669"/>
    <property type="project" value="UniProtKB-KW"/>
</dbReference>
<dbReference type="CDD" id="cd16670">
    <property type="entry name" value="RING-H2_RNF215"/>
    <property type="match status" value="1"/>
</dbReference>
<dbReference type="FunFam" id="3.30.40.10:FF:000315">
    <property type="entry name" value="RING finger protein 215"/>
    <property type="match status" value="1"/>
</dbReference>
<dbReference type="FunFam" id="3.50.30.30:FF:000031">
    <property type="entry name" value="RING finger protein 215"/>
    <property type="match status" value="1"/>
</dbReference>
<dbReference type="Gene3D" id="3.50.30.30">
    <property type="match status" value="1"/>
</dbReference>
<dbReference type="Gene3D" id="3.30.40.10">
    <property type="entry name" value="Zinc/RING finger domain, C3HC4 (zinc finger)"/>
    <property type="match status" value="1"/>
</dbReference>
<dbReference type="InterPro" id="IPR001841">
    <property type="entry name" value="Znf_RING"/>
</dbReference>
<dbReference type="InterPro" id="IPR013083">
    <property type="entry name" value="Znf_RING/FYVE/PHD"/>
</dbReference>
<dbReference type="InterPro" id="IPR051073">
    <property type="entry name" value="ZNRF3_Arkadia_E3_ligases"/>
</dbReference>
<dbReference type="PANTHER" id="PTHR16200">
    <property type="entry name" value="RING ZINC FINGER"/>
    <property type="match status" value="1"/>
</dbReference>
<dbReference type="Pfam" id="PF13639">
    <property type="entry name" value="zf-RING_2"/>
    <property type="match status" value="1"/>
</dbReference>
<dbReference type="SMART" id="SM00184">
    <property type="entry name" value="RING"/>
    <property type="match status" value="1"/>
</dbReference>
<dbReference type="SUPFAM" id="SSF57850">
    <property type="entry name" value="RING/U-box"/>
    <property type="match status" value="1"/>
</dbReference>
<dbReference type="PROSITE" id="PS50089">
    <property type="entry name" value="ZF_RING_2"/>
    <property type="match status" value="1"/>
</dbReference>
<keyword id="KW-0325">Glycoprotein</keyword>
<keyword id="KW-0472">Membrane</keyword>
<keyword id="KW-0479">Metal-binding</keyword>
<keyword id="KW-1185">Reference proteome</keyword>
<keyword id="KW-0812">Transmembrane</keyword>
<keyword id="KW-1133">Transmembrane helix</keyword>
<keyword id="KW-0862">Zinc</keyword>
<keyword id="KW-0863">Zinc-finger</keyword>
<protein>
    <recommendedName>
        <fullName>RING finger protein 215</fullName>
    </recommendedName>
</protein>
<accession>Q5SPX3</accession>
<accession>Q5SPX2</accession>
<accession>Q5SPX4</accession>
<accession>Q9DCW1</accession>
<proteinExistence type="evidence at transcript level"/>
<comment type="subcellular location">
    <subcellularLocation>
        <location evidence="4">Membrane</location>
        <topology evidence="4">Multi-pass membrane protein</topology>
    </subcellularLocation>
</comment>
<comment type="sequence caution" evidence="4">
    <conflict type="erroneous gene model prediction">
        <sequence resource="EMBL-CDS" id="CAI25741"/>
    </conflict>
</comment>
<comment type="sequence caution" evidence="4">
    <conflict type="erroneous gene model prediction">
        <sequence resource="EMBL-CDS" id="CAI25743"/>
    </conflict>
</comment>
<organism>
    <name type="scientific">Mus musculus</name>
    <name type="common">Mouse</name>
    <dbReference type="NCBI Taxonomy" id="10090"/>
    <lineage>
        <taxon>Eukaryota</taxon>
        <taxon>Metazoa</taxon>
        <taxon>Chordata</taxon>
        <taxon>Craniata</taxon>
        <taxon>Vertebrata</taxon>
        <taxon>Euteleostomi</taxon>
        <taxon>Mammalia</taxon>
        <taxon>Eutheria</taxon>
        <taxon>Euarchontoglires</taxon>
        <taxon>Glires</taxon>
        <taxon>Rodentia</taxon>
        <taxon>Myomorpha</taxon>
        <taxon>Muroidea</taxon>
        <taxon>Muridae</taxon>
        <taxon>Murinae</taxon>
        <taxon>Mus</taxon>
        <taxon>Mus</taxon>
    </lineage>
</organism>
<name>RN215_MOUSE</name>
<gene>
    <name type="primary">Rnf215</name>
</gene>